<name>CXD2_BOVIN</name>
<dbReference type="EMBL" id="AY150575">
    <property type="protein sequence ID" value="AAN37413.1"/>
    <property type="molecule type" value="mRNA"/>
</dbReference>
<dbReference type="RefSeq" id="NP_777108.1">
    <property type="nucleotide sequence ID" value="NM_174683.1"/>
</dbReference>
<dbReference type="SMR" id="Q866T7"/>
<dbReference type="FunCoup" id="Q866T7">
    <property type="interactions" value="149"/>
</dbReference>
<dbReference type="STRING" id="9913.ENSBTAP00000028966"/>
<dbReference type="PaxDb" id="9913-ENSBTAP00000028966"/>
<dbReference type="PeptideAtlas" id="Q866T7"/>
<dbReference type="Ensembl" id="ENSBTAT00000028966.4">
    <property type="protein sequence ID" value="ENSBTAP00000028966.2"/>
    <property type="gene ID" value="ENSBTAG00000021730.4"/>
</dbReference>
<dbReference type="GeneID" id="282577"/>
<dbReference type="KEGG" id="bta:282577"/>
<dbReference type="CTD" id="57369"/>
<dbReference type="VEuPathDB" id="HostDB:ENSBTAG00000021730"/>
<dbReference type="VGNC" id="VGNC:29385">
    <property type="gene designation" value="GJD2"/>
</dbReference>
<dbReference type="eggNOG" id="ENOG502QV4X">
    <property type="taxonomic scope" value="Eukaryota"/>
</dbReference>
<dbReference type="GeneTree" id="ENSGT01130000278276"/>
<dbReference type="HOGENOM" id="CLU_037388_4_0_1"/>
<dbReference type="InParanoid" id="Q866T7"/>
<dbReference type="OMA" id="KEMEPDC"/>
<dbReference type="OrthoDB" id="10012477at2759"/>
<dbReference type="TreeFam" id="TF329606"/>
<dbReference type="Reactome" id="R-BTA-112303">
    <property type="pathway name" value="Electric Transmission Across Gap Junctions"/>
</dbReference>
<dbReference type="Reactome" id="R-BTA-190861">
    <property type="pathway name" value="Gap junction assembly"/>
</dbReference>
<dbReference type="Proteomes" id="UP000009136">
    <property type="component" value="Chromosome 10"/>
</dbReference>
<dbReference type="Bgee" id="ENSBTAG00000021730">
    <property type="expression patterns" value="Expressed in retina and 13 other cell types or tissues"/>
</dbReference>
<dbReference type="GO" id="GO:0005922">
    <property type="term" value="C:connexin complex"/>
    <property type="evidence" value="ECO:0000318"/>
    <property type="project" value="GO_Central"/>
</dbReference>
<dbReference type="GO" id="GO:0045202">
    <property type="term" value="C:synapse"/>
    <property type="evidence" value="ECO:0007669"/>
    <property type="project" value="GOC"/>
</dbReference>
<dbReference type="GO" id="GO:0005243">
    <property type="term" value="F:gap junction channel activity"/>
    <property type="evidence" value="ECO:0000318"/>
    <property type="project" value="GO_Central"/>
</dbReference>
<dbReference type="GO" id="GO:0007267">
    <property type="term" value="P:cell-cell signaling"/>
    <property type="evidence" value="ECO:0000250"/>
    <property type="project" value="AgBase"/>
</dbReference>
<dbReference type="GO" id="GO:0007268">
    <property type="term" value="P:chemical synaptic transmission"/>
    <property type="evidence" value="ECO:0000250"/>
    <property type="project" value="AgBase"/>
</dbReference>
<dbReference type="GO" id="GO:0007601">
    <property type="term" value="P:visual perception"/>
    <property type="evidence" value="ECO:0000250"/>
    <property type="project" value="AgBase"/>
</dbReference>
<dbReference type="FunFam" id="1.20.1440.80:FF:000003">
    <property type="entry name" value="Gap junction protein"/>
    <property type="match status" value="1"/>
</dbReference>
<dbReference type="Gene3D" id="1.20.1440.80">
    <property type="entry name" value="Gap junction channel protein cysteine-rich domain"/>
    <property type="match status" value="1"/>
</dbReference>
<dbReference type="InterPro" id="IPR000500">
    <property type="entry name" value="Connexin"/>
</dbReference>
<dbReference type="InterPro" id="IPR002260">
    <property type="entry name" value="Connexin36"/>
</dbReference>
<dbReference type="InterPro" id="IPR019570">
    <property type="entry name" value="Connexin_CCC"/>
</dbReference>
<dbReference type="InterPro" id="IPR017990">
    <property type="entry name" value="Connexin_CS"/>
</dbReference>
<dbReference type="InterPro" id="IPR013092">
    <property type="entry name" value="Connexin_N"/>
</dbReference>
<dbReference type="InterPro" id="IPR038359">
    <property type="entry name" value="Connexin_N_sf"/>
</dbReference>
<dbReference type="PANTHER" id="PTHR11984">
    <property type="entry name" value="CONNEXIN"/>
    <property type="match status" value="1"/>
</dbReference>
<dbReference type="PANTHER" id="PTHR11984:SF32">
    <property type="entry name" value="GAP JUNCTION DELTA-2 PROTEIN"/>
    <property type="match status" value="1"/>
</dbReference>
<dbReference type="Pfam" id="PF00029">
    <property type="entry name" value="Connexin"/>
    <property type="match status" value="1"/>
</dbReference>
<dbReference type="PRINTS" id="PR00206">
    <property type="entry name" value="CONNEXIN"/>
</dbReference>
<dbReference type="PRINTS" id="PR01131">
    <property type="entry name" value="CONNEXIN36"/>
</dbReference>
<dbReference type="SMART" id="SM00037">
    <property type="entry name" value="CNX"/>
    <property type="match status" value="1"/>
</dbReference>
<dbReference type="SMART" id="SM01089">
    <property type="entry name" value="Connexin_CCC"/>
    <property type="match status" value="1"/>
</dbReference>
<dbReference type="PROSITE" id="PS00407">
    <property type="entry name" value="CONNEXINS_1"/>
    <property type="match status" value="1"/>
</dbReference>
<dbReference type="PROSITE" id="PS00408">
    <property type="entry name" value="CONNEXINS_2"/>
    <property type="match status" value="1"/>
</dbReference>
<protein>
    <recommendedName>
        <fullName>Gap junction delta-2 protein</fullName>
    </recommendedName>
    <alternativeName>
        <fullName>Connexin-36</fullName>
        <shortName>Cx36</shortName>
    </alternativeName>
    <alternativeName>
        <fullName>Gap junction alpha-9 protein</fullName>
    </alternativeName>
</protein>
<keyword id="KW-0965">Cell junction</keyword>
<keyword id="KW-1003">Cell membrane</keyword>
<keyword id="KW-0303">Gap junction</keyword>
<keyword id="KW-0472">Membrane</keyword>
<keyword id="KW-1185">Reference proteome</keyword>
<keyword id="KW-0812">Transmembrane</keyword>
<keyword id="KW-1133">Transmembrane helix</keyword>
<accession>Q866T7</accession>
<organism>
    <name type="scientific">Bos taurus</name>
    <name type="common">Bovine</name>
    <dbReference type="NCBI Taxonomy" id="9913"/>
    <lineage>
        <taxon>Eukaryota</taxon>
        <taxon>Metazoa</taxon>
        <taxon>Chordata</taxon>
        <taxon>Craniata</taxon>
        <taxon>Vertebrata</taxon>
        <taxon>Euteleostomi</taxon>
        <taxon>Mammalia</taxon>
        <taxon>Eutheria</taxon>
        <taxon>Laurasiatheria</taxon>
        <taxon>Artiodactyla</taxon>
        <taxon>Ruminantia</taxon>
        <taxon>Pecora</taxon>
        <taxon>Bovidae</taxon>
        <taxon>Bovinae</taxon>
        <taxon>Bos</taxon>
    </lineage>
</organism>
<proteinExistence type="evidence at transcript level"/>
<gene>
    <name type="primary">GJD2</name>
    <name type="synonym">GJA9</name>
</gene>
<sequence>MGEWTILERLLEAAVQQHSTMIGRILLTVVVIFRILIVAIVGETVYDDEQTMFVCNTLQPGCNQACYDRAFPISHIRYWVFQIIMVCTPSLCFITYSVHQSAKQRERRYSTVFLALDRDPPESMGGPGGTGGGGSGGGKREDKKLQNAIVNGVLQNTENTSKETEPDCLEVKELTPHPSGLRTASRSKLRRQEGISRFYIIQVVFRNALEIGFLVGQYFLYGFSVPGLYECDRYPCIKEVECYVSRPTEKTVFLVFMFAVSGICVVLNLAELNHLGWRKIKLAVRGAQAKRKSVYEIRNKDLPRVSVPNFGRTQSSDSAYV</sequence>
<comment type="function">
    <text evidence="1">One gap junction consists of a cluster of closely packed pairs of transmembrane channels, the connexons, through which materials of low MW diffuse from one cell to a neighboring cell.</text>
</comment>
<comment type="subunit">
    <text evidence="1">A connexon is composed of a hexamer of connexins.</text>
</comment>
<comment type="subcellular location">
    <subcellularLocation>
        <location>Cell membrane</location>
        <topology>Multi-pass membrane protein</topology>
    </subcellularLocation>
    <subcellularLocation>
        <location>Cell junction</location>
        <location>Gap junction</location>
    </subcellularLocation>
</comment>
<comment type="similarity">
    <text evidence="4">Belongs to the connexin family. Delta-type subfamily.</text>
</comment>
<feature type="chain" id="PRO_0000057834" description="Gap junction delta-2 protein">
    <location>
        <begin position="1"/>
        <end position="321"/>
    </location>
</feature>
<feature type="topological domain" description="Cytoplasmic" evidence="2">
    <location>
        <begin position="1"/>
        <end position="19"/>
    </location>
</feature>
<feature type="transmembrane region" description="Helical" evidence="2">
    <location>
        <begin position="20"/>
        <end position="42"/>
    </location>
</feature>
<feature type="topological domain" description="Extracellular" evidence="2">
    <location>
        <begin position="43"/>
        <end position="75"/>
    </location>
</feature>
<feature type="transmembrane region" description="Helical" evidence="2">
    <location>
        <begin position="76"/>
        <end position="98"/>
    </location>
</feature>
<feature type="topological domain" description="Cytoplasmic" evidence="2">
    <location>
        <begin position="99"/>
        <end position="197"/>
    </location>
</feature>
<feature type="transmembrane region" description="Helical" evidence="2">
    <location>
        <begin position="198"/>
        <end position="220"/>
    </location>
</feature>
<feature type="topological domain" description="Extracellular" evidence="2">
    <location>
        <begin position="221"/>
        <end position="252"/>
    </location>
</feature>
<feature type="transmembrane region" description="Helical" evidence="2">
    <location>
        <begin position="253"/>
        <end position="275"/>
    </location>
</feature>
<feature type="topological domain" description="Cytoplasmic" evidence="2">
    <location>
        <begin position="276"/>
        <end position="321"/>
    </location>
</feature>
<feature type="region of interest" description="Disordered" evidence="3">
    <location>
        <begin position="117"/>
        <end position="141"/>
    </location>
</feature>
<feature type="compositionally biased region" description="Gly residues" evidence="3">
    <location>
        <begin position="125"/>
        <end position="137"/>
    </location>
</feature>
<evidence type="ECO:0000250" key="1"/>
<evidence type="ECO:0000255" key="2"/>
<evidence type="ECO:0000256" key="3">
    <source>
        <dbReference type="SAM" id="MobiDB-lite"/>
    </source>
</evidence>
<evidence type="ECO:0000305" key="4"/>
<reference key="1">
    <citation type="submission" date="2002-09" db="EMBL/GenBank/DDBJ databases">
        <title>Bovine connexin-36 (CX36) mRNA.</title>
        <authorList>
            <person name="Singh V."/>
            <person name="Pulukuri S."/>
            <person name="Duda T."/>
            <person name="Venkataraman V."/>
            <person name="Mitton K.P."/>
            <person name="Sitaramayya A."/>
        </authorList>
    </citation>
    <scope>NUCLEOTIDE SEQUENCE [MRNA]</scope>
    <source>
        <tissue>Retina</tissue>
    </source>
</reference>